<evidence type="ECO:0000255" key="1">
    <source>
        <dbReference type="HAMAP-Rule" id="MF_00948"/>
    </source>
</evidence>
<proteinExistence type="inferred from homology"/>
<keyword id="KW-1185">Reference proteome</keyword>
<keyword id="KW-0804">Transcription</keyword>
<keyword id="KW-0889">Transcription antitermination</keyword>
<keyword id="KW-0805">Transcription regulation</keyword>
<keyword id="KW-0806">Transcription termination</keyword>
<gene>
    <name evidence="1" type="primary">nusG</name>
    <name type="ordered locus">DR_2047</name>
</gene>
<organism>
    <name type="scientific">Deinococcus radiodurans (strain ATCC 13939 / DSM 20539 / JCM 16871 / CCUG 27074 / LMG 4051 / NBRC 15346 / NCIMB 9279 / VKM B-1422 / R1)</name>
    <dbReference type="NCBI Taxonomy" id="243230"/>
    <lineage>
        <taxon>Bacteria</taxon>
        <taxon>Thermotogati</taxon>
        <taxon>Deinococcota</taxon>
        <taxon>Deinococci</taxon>
        <taxon>Deinococcales</taxon>
        <taxon>Deinococcaceae</taxon>
        <taxon>Deinococcus</taxon>
    </lineage>
</organism>
<feature type="chain" id="PRO_0000113925" description="Transcription termination/antitermination protein NusG">
    <location>
        <begin position="1"/>
        <end position="190"/>
    </location>
</feature>
<feature type="domain" description="KOW" evidence="1">
    <location>
        <begin position="141"/>
        <end position="165"/>
    </location>
</feature>
<comment type="function">
    <text evidence="1">Participates in transcription elongation, termination and antitermination.</text>
</comment>
<comment type="similarity">
    <text evidence="1">Belongs to the NusG family.</text>
</comment>
<dbReference type="EMBL" id="AE000513">
    <property type="protein sequence ID" value="AAF11597.1"/>
    <property type="molecule type" value="Genomic_DNA"/>
</dbReference>
<dbReference type="PIR" id="B75321">
    <property type="entry name" value="B75321"/>
</dbReference>
<dbReference type="RefSeq" id="NP_295770.1">
    <property type="nucleotide sequence ID" value="NC_001263.1"/>
</dbReference>
<dbReference type="RefSeq" id="WP_010888679.1">
    <property type="nucleotide sequence ID" value="NC_001263.1"/>
</dbReference>
<dbReference type="SMR" id="Q9RSS6"/>
<dbReference type="FunCoup" id="Q9RSS6">
    <property type="interactions" value="434"/>
</dbReference>
<dbReference type="STRING" id="243230.DR_2047"/>
<dbReference type="PaxDb" id="243230-DR_2047"/>
<dbReference type="EnsemblBacteria" id="AAF11597">
    <property type="protein sequence ID" value="AAF11597"/>
    <property type="gene ID" value="DR_2047"/>
</dbReference>
<dbReference type="GeneID" id="69518286"/>
<dbReference type="KEGG" id="dra:DR_2047"/>
<dbReference type="PATRIC" id="fig|243230.17.peg.2274"/>
<dbReference type="eggNOG" id="COG0250">
    <property type="taxonomic scope" value="Bacteria"/>
</dbReference>
<dbReference type="HOGENOM" id="CLU_067287_1_0_0"/>
<dbReference type="InParanoid" id="Q9RSS6"/>
<dbReference type="OrthoDB" id="9809075at2"/>
<dbReference type="Proteomes" id="UP000002524">
    <property type="component" value="Chromosome 1"/>
</dbReference>
<dbReference type="GO" id="GO:0005829">
    <property type="term" value="C:cytosol"/>
    <property type="evidence" value="ECO:0000318"/>
    <property type="project" value="GO_Central"/>
</dbReference>
<dbReference type="GO" id="GO:0006353">
    <property type="term" value="P:DNA-templated transcription termination"/>
    <property type="evidence" value="ECO:0007669"/>
    <property type="project" value="UniProtKB-UniRule"/>
</dbReference>
<dbReference type="GO" id="GO:0032784">
    <property type="term" value="P:regulation of DNA-templated transcription elongation"/>
    <property type="evidence" value="ECO:0007669"/>
    <property type="project" value="InterPro"/>
</dbReference>
<dbReference type="GO" id="GO:0031564">
    <property type="term" value="P:transcription antitermination"/>
    <property type="evidence" value="ECO:0007669"/>
    <property type="project" value="UniProtKB-UniRule"/>
</dbReference>
<dbReference type="GO" id="GO:0140673">
    <property type="term" value="P:transcription elongation-coupled chromatin remodeling"/>
    <property type="evidence" value="ECO:0007669"/>
    <property type="project" value="InterPro"/>
</dbReference>
<dbReference type="CDD" id="cd06091">
    <property type="entry name" value="KOW_NusG"/>
    <property type="match status" value="1"/>
</dbReference>
<dbReference type="CDD" id="cd09891">
    <property type="entry name" value="NGN_Bact_1"/>
    <property type="match status" value="1"/>
</dbReference>
<dbReference type="FunFam" id="2.30.30.30:FF:000002">
    <property type="entry name" value="Transcription termination/antitermination factor NusG"/>
    <property type="match status" value="1"/>
</dbReference>
<dbReference type="FunFam" id="3.30.70.940:FF:000002">
    <property type="entry name" value="Transcription termination/antitermination protein NusG"/>
    <property type="match status" value="1"/>
</dbReference>
<dbReference type="Gene3D" id="2.30.30.30">
    <property type="match status" value="1"/>
</dbReference>
<dbReference type="Gene3D" id="3.30.70.940">
    <property type="entry name" value="NusG, N-terminal domain"/>
    <property type="match status" value="1"/>
</dbReference>
<dbReference type="HAMAP" id="MF_00948">
    <property type="entry name" value="NusG"/>
    <property type="match status" value="1"/>
</dbReference>
<dbReference type="InterPro" id="IPR005824">
    <property type="entry name" value="KOW"/>
</dbReference>
<dbReference type="InterPro" id="IPR047050">
    <property type="entry name" value="NGN"/>
</dbReference>
<dbReference type="InterPro" id="IPR006645">
    <property type="entry name" value="NGN-like_dom"/>
</dbReference>
<dbReference type="InterPro" id="IPR036735">
    <property type="entry name" value="NGN_dom_sf"/>
</dbReference>
<dbReference type="InterPro" id="IPR043425">
    <property type="entry name" value="NusG-like"/>
</dbReference>
<dbReference type="InterPro" id="IPR014722">
    <property type="entry name" value="Rib_uL2_dom2"/>
</dbReference>
<dbReference type="InterPro" id="IPR001062">
    <property type="entry name" value="Transcrpt_antiterm_NusG"/>
</dbReference>
<dbReference type="InterPro" id="IPR015869">
    <property type="entry name" value="Transcrpt_antiterm_NusG_bac_CS"/>
</dbReference>
<dbReference type="InterPro" id="IPR008991">
    <property type="entry name" value="Translation_prot_SH3-like_sf"/>
</dbReference>
<dbReference type="NCBIfam" id="TIGR00922">
    <property type="entry name" value="nusG"/>
    <property type="match status" value="1"/>
</dbReference>
<dbReference type="PANTHER" id="PTHR30265">
    <property type="entry name" value="RHO-INTERACTING TRANSCRIPTION TERMINATION FACTOR NUSG"/>
    <property type="match status" value="1"/>
</dbReference>
<dbReference type="PANTHER" id="PTHR30265:SF2">
    <property type="entry name" value="TRANSCRIPTION TERMINATION_ANTITERMINATION PROTEIN NUSG"/>
    <property type="match status" value="1"/>
</dbReference>
<dbReference type="Pfam" id="PF00467">
    <property type="entry name" value="KOW"/>
    <property type="match status" value="1"/>
</dbReference>
<dbReference type="Pfam" id="PF02357">
    <property type="entry name" value="NusG"/>
    <property type="match status" value="1"/>
</dbReference>
<dbReference type="PRINTS" id="PR00338">
    <property type="entry name" value="NUSGTNSCPFCT"/>
</dbReference>
<dbReference type="SMART" id="SM00739">
    <property type="entry name" value="KOW"/>
    <property type="match status" value="1"/>
</dbReference>
<dbReference type="SMART" id="SM00738">
    <property type="entry name" value="NGN"/>
    <property type="match status" value="1"/>
</dbReference>
<dbReference type="SUPFAM" id="SSF82679">
    <property type="entry name" value="N-utilization substance G protein NusG, N-terminal domain"/>
    <property type="match status" value="1"/>
</dbReference>
<dbReference type="SUPFAM" id="SSF50104">
    <property type="entry name" value="Translation proteins SH3-like domain"/>
    <property type="match status" value="1"/>
</dbReference>
<dbReference type="PROSITE" id="PS01014">
    <property type="entry name" value="NUSG"/>
    <property type="match status" value="1"/>
</dbReference>
<reference key="1">
    <citation type="journal article" date="1999" name="Science">
        <title>Genome sequence of the radioresistant bacterium Deinococcus radiodurans R1.</title>
        <authorList>
            <person name="White O."/>
            <person name="Eisen J.A."/>
            <person name="Heidelberg J.F."/>
            <person name="Hickey E.K."/>
            <person name="Peterson J.D."/>
            <person name="Dodson R.J."/>
            <person name="Haft D.H."/>
            <person name="Gwinn M.L."/>
            <person name="Nelson W.C."/>
            <person name="Richardson D.L."/>
            <person name="Moffat K.S."/>
            <person name="Qin H."/>
            <person name="Jiang L."/>
            <person name="Pamphile W."/>
            <person name="Crosby M."/>
            <person name="Shen M."/>
            <person name="Vamathevan J.J."/>
            <person name="Lam P."/>
            <person name="McDonald L.A."/>
            <person name="Utterback T.R."/>
            <person name="Zalewski C."/>
            <person name="Makarova K.S."/>
            <person name="Aravind L."/>
            <person name="Daly M.J."/>
            <person name="Minton K.W."/>
            <person name="Fleischmann R.D."/>
            <person name="Ketchum K.A."/>
            <person name="Nelson K.E."/>
            <person name="Salzberg S.L."/>
            <person name="Smith H.O."/>
            <person name="Venter J.C."/>
            <person name="Fraser C.M."/>
        </authorList>
    </citation>
    <scope>NUCLEOTIDE SEQUENCE [LARGE SCALE GENOMIC DNA]</scope>
    <source>
        <strain>ATCC 13939 / DSM 20539 / JCM 16871 / CCUG 27074 / LMG 4051 / NBRC 15346 / NCIMB 9279 / VKM B-1422 / R1</strain>
    </source>
</reference>
<protein>
    <recommendedName>
        <fullName evidence="1">Transcription termination/antitermination protein NusG</fullName>
    </recommendedName>
</protein>
<name>NUSG_DEIRA</name>
<sequence>MSIEWYAVHTYVGQEDRVQDQLMDRARRLGMYRTKIFQVLQPEEEAVEIQEGGKKVNVKRKLFPGYVFVQMDVEDDDAPGELGESWEVVRGTSGVTGFVGTATRPVPLSPEEVQRLLTSVGVAAQPVVEEAPRIKVDLKAGDMVRVTSGPFADFSGVVSEVNAPQAKVKVLVSIFGRETPVELDFSQVAK</sequence>
<accession>Q9RSS6</accession>